<reference key="1">
    <citation type="journal article" date="1997" name="Res. Commun. Biochem. Cell Mol. Biol.">
        <title>Studies on m-hydroxybenzoate 4-hydroxylase I. Purification and properties.</title>
        <authorList>
            <person name="Chen R."/>
            <person name="Chaen H."/>
            <person name="Hosokawa K."/>
        </authorList>
    </citation>
    <scope>NUCLEOTIDE SEQUENCE [GENOMIC DNA]</scope>
    <source>
        <strain>KH122-3S</strain>
    </source>
</reference>
<reference key="2">
    <citation type="journal article" date="2008" name="Biochem. Biophys. Res. Commun.">
        <title>Examination and expansion of the substrate range of m-hydroxybenzoate hydroxylase.</title>
        <authorList>
            <person name="Chang H.K."/>
            <person name="Zylstra G.J."/>
        </authorList>
    </citation>
    <scope>NUCLEOTIDE SEQUENCE [GENOMIC DNA]</scope>
    <scope>FUNCTION</scope>
    <scope>CATALYTIC ACTIVITY</scope>
    <scope>MUTAGENESIS OF ASN-227; VAL-257; GLN-292; ALA-400; ASP-416 AND LYS-429</scope>
    <source>
        <strain>GZ39</strain>
    </source>
</reference>
<reference key="3">
    <citation type="journal article" date="1998" name="Res. Commun. Biochem. Cell Mol. Biol.">
        <title>Crystallization and future characterization of meta-hydroxybenzoate 4-hydroxylase from Comamonas testosteroni.</title>
        <authorList>
            <person name="Chen R."/>
            <person name="Oki H."/>
            <person name="Scott R.P. Jr."/>
            <person name="Yamaguchi H."/>
            <person name="Kusunoki M."/>
            <person name="Matsuura Y."/>
            <person name="Chaen H."/>
            <person name="Tsugita A."/>
            <person name="Hosokawa K."/>
        </authorList>
    </citation>
    <scope>CRYSTALLIZATION</scope>
    <source>
        <strain>KH122-3S</strain>
    </source>
</reference>
<reference key="4">
    <citation type="journal article" date="2014" name="PLoS ONE">
        <title>Finding sequences for over 270 orphan enzymes.</title>
        <authorList>
            <person name="Shearer A.G."/>
            <person name="Altman T."/>
            <person name="Rhee C.D."/>
        </authorList>
    </citation>
    <scope>IDENTIFICATION</scope>
</reference>
<reference key="5">
    <citation type="journal article" date="2006" name="J. Mol. Biol.">
        <title>Crystal structure of 3-hydroxybenzoate hydroxylase from Comamonas testosteroni has a large tunnel for substrate and oxygen access to the active site.</title>
        <authorList>
            <person name="Hiromoto T."/>
            <person name="Fujiwara S."/>
            <person name="Hosokawa K."/>
            <person name="Yamaguchi H."/>
        </authorList>
    </citation>
    <scope>X-RAY CRYSTALLOGRAPHY (1.8 ANGSTROMS) IN COMPLEX WITH FAD</scope>
    <scope>COFACTOR</scope>
    <scope>SUBUNIT</scope>
    <source>
        <strain>KH122-3S</strain>
    </source>
</reference>
<dbReference type="EC" id="1.14.13.23"/>
<dbReference type="EMBL" id="AY450844">
    <property type="protein sequence ID" value="AAR25885.1"/>
    <property type="molecule type" value="Genomic_DNA"/>
</dbReference>
<dbReference type="EMBL" id="EF394133">
    <property type="protein sequence ID" value="ABN58510.1"/>
    <property type="molecule type" value="Genomic_DNA"/>
</dbReference>
<dbReference type="EMBL" id="EF394138">
    <property type="protein sequence ID" value="ABN58515.1"/>
    <property type="molecule type" value="Genomic_DNA"/>
</dbReference>
<dbReference type="EMBL" id="AB119008">
    <property type="protein sequence ID" value="BAF34928.1"/>
    <property type="molecule type" value="Genomic_DNA"/>
</dbReference>
<dbReference type="RefSeq" id="WP_003074815.1">
    <property type="nucleotide sequence ID" value="NZ_UFXL01000001.1"/>
</dbReference>
<dbReference type="PDB" id="2DKH">
    <property type="method" value="X-ray"/>
    <property type="resolution" value="1.80 A"/>
    <property type="chains" value="A=1-639"/>
</dbReference>
<dbReference type="PDB" id="2DKI">
    <property type="method" value="X-ray"/>
    <property type="resolution" value="2.50 A"/>
    <property type="chains" value="A=1-639"/>
</dbReference>
<dbReference type="PDBsum" id="2DKH"/>
<dbReference type="PDBsum" id="2DKI"/>
<dbReference type="SMR" id="Q6SSJ6"/>
<dbReference type="BRENDA" id="1.14.13.2">
    <property type="organism ID" value="1590"/>
</dbReference>
<dbReference type="BRENDA" id="1.14.13.23">
    <property type="organism ID" value="1590"/>
</dbReference>
<dbReference type="EvolutionaryTrace" id="Q6SSJ6"/>
<dbReference type="GO" id="GO:0018668">
    <property type="term" value="F:3-hydroxybenzoate 4-monooxygenase activity"/>
    <property type="evidence" value="ECO:0000314"/>
    <property type="project" value="UniProtKB"/>
</dbReference>
<dbReference type="GO" id="GO:0071949">
    <property type="term" value="F:FAD binding"/>
    <property type="evidence" value="ECO:0000314"/>
    <property type="project" value="UniProtKB"/>
</dbReference>
<dbReference type="GO" id="GO:0042803">
    <property type="term" value="F:protein homodimerization activity"/>
    <property type="evidence" value="ECO:0000314"/>
    <property type="project" value="UniProtKB"/>
</dbReference>
<dbReference type="CDD" id="cd02979">
    <property type="entry name" value="PHOX_C"/>
    <property type="match status" value="1"/>
</dbReference>
<dbReference type="FunFam" id="3.40.30.20:FF:000001">
    <property type="entry name" value="3-hydroxybenzoate 4-monooxygenase"/>
    <property type="match status" value="1"/>
</dbReference>
<dbReference type="Gene3D" id="3.40.30.20">
    <property type="match status" value="1"/>
</dbReference>
<dbReference type="Gene3D" id="3.30.9.10">
    <property type="entry name" value="D-Amino Acid Oxidase, subunit A, domain 2"/>
    <property type="match status" value="1"/>
</dbReference>
<dbReference type="Gene3D" id="3.50.50.60">
    <property type="entry name" value="FAD/NAD(P)-binding domain"/>
    <property type="match status" value="1"/>
</dbReference>
<dbReference type="InterPro" id="IPR002938">
    <property type="entry name" value="FAD-bd"/>
</dbReference>
<dbReference type="InterPro" id="IPR036188">
    <property type="entry name" value="FAD/NAD-bd_sf"/>
</dbReference>
<dbReference type="InterPro" id="IPR012941">
    <property type="entry name" value="Phe_hydrox_C_dim_dom"/>
</dbReference>
<dbReference type="InterPro" id="IPR038220">
    <property type="entry name" value="PHOX_C_sf"/>
</dbReference>
<dbReference type="InterPro" id="IPR050641">
    <property type="entry name" value="RIFMO-like"/>
</dbReference>
<dbReference type="InterPro" id="IPR036249">
    <property type="entry name" value="Thioredoxin-like_sf"/>
</dbReference>
<dbReference type="NCBIfam" id="NF006144">
    <property type="entry name" value="PRK08294.1"/>
    <property type="match status" value="1"/>
</dbReference>
<dbReference type="PANTHER" id="PTHR43004:SF19">
    <property type="entry name" value="BINDING MONOOXYGENASE, PUTATIVE (JCVI)-RELATED"/>
    <property type="match status" value="1"/>
</dbReference>
<dbReference type="PANTHER" id="PTHR43004">
    <property type="entry name" value="TRK SYSTEM POTASSIUM UPTAKE PROTEIN"/>
    <property type="match status" value="1"/>
</dbReference>
<dbReference type="Pfam" id="PF01494">
    <property type="entry name" value="FAD_binding_3"/>
    <property type="match status" value="1"/>
</dbReference>
<dbReference type="Pfam" id="PF07976">
    <property type="entry name" value="Phe_hydrox_dim"/>
    <property type="match status" value="1"/>
</dbReference>
<dbReference type="PRINTS" id="PR00420">
    <property type="entry name" value="RNGMNOXGNASE"/>
</dbReference>
<dbReference type="SUPFAM" id="SSF54373">
    <property type="entry name" value="FAD-linked reductases, C-terminal domain"/>
    <property type="match status" value="1"/>
</dbReference>
<dbReference type="SUPFAM" id="SSF51905">
    <property type="entry name" value="FAD/NAD(P)-binding domain"/>
    <property type="match status" value="1"/>
</dbReference>
<dbReference type="SUPFAM" id="SSF52833">
    <property type="entry name" value="Thioredoxin-like"/>
    <property type="match status" value="1"/>
</dbReference>
<comment type="function">
    <text evidence="2">Converts 3-hydroxybenzoate (m-hydroxybenzoate), and to a lesser extent p-hydroxybenzoate, to 3,4-dihydroxybenzoate (protocatechuate). Also acts on a number of analogs of 3-hydroxybenzoate substituted in the 2, 4, 5 and 6 positions.</text>
</comment>
<comment type="catalytic activity">
    <reaction evidence="2">
        <text>3-hydroxybenzoate + NADPH + O2 + H(+) = 3,4-dihydroxybenzoate + NADP(+) + H2O</text>
        <dbReference type="Rhea" id="RHEA:11480"/>
        <dbReference type="ChEBI" id="CHEBI:15377"/>
        <dbReference type="ChEBI" id="CHEBI:15378"/>
        <dbReference type="ChEBI" id="CHEBI:15379"/>
        <dbReference type="ChEBI" id="CHEBI:16193"/>
        <dbReference type="ChEBI" id="CHEBI:36241"/>
        <dbReference type="ChEBI" id="CHEBI:57783"/>
        <dbReference type="ChEBI" id="CHEBI:58349"/>
        <dbReference type="EC" id="1.14.13.23"/>
    </reaction>
</comment>
<comment type="cofactor">
    <cofactor evidence="1">
        <name>FAD</name>
        <dbReference type="ChEBI" id="CHEBI:57692"/>
    </cofactor>
</comment>
<comment type="subunit">
    <text evidence="1">Homodimer.</text>
</comment>
<comment type="similarity">
    <text evidence="3">Belongs to the PheA/TfdB FAD monooxygenase family.</text>
</comment>
<name>MOBA_COMTE</name>
<proteinExistence type="evidence at protein level"/>
<keyword id="KW-0002">3D-structure</keyword>
<keyword id="KW-0274">FAD</keyword>
<keyword id="KW-0285">Flavoprotein</keyword>
<keyword id="KW-0521">NADP</keyword>
<keyword id="KW-0560">Oxidoreductase</keyword>
<protein>
    <recommendedName>
        <fullName>3-hydroxybenzoate 4-monooxygenase</fullName>
        <ecNumber>1.14.13.23</ecNumber>
    </recommendedName>
    <alternativeName>
        <fullName>3-hydroxybenzoate 4-hydroxylase</fullName>
    </alternativeName>
    <alternativeName>
        <fullName>M-hydroxybenzoate hydroxylase</fullName>
    </alternativeName>
</protein>
<accession>Q6SSJ6</accession>
<accession>Q05KQ5</accession>
<feature type="chain" id="PRO_0000430458" description="3-hydroxybenzoate 4-monooxygenase">
    <location>
        <begin position="1"/>
        <end position="639"/>
    </location>
</feature>
<feature type="binding site" evidence="1">
    <location>
        <begin position="34"/>
        <end position="64"/>
    </location>
    <ligand>
        <name>FAD</name>
        <dbReference type="ChEBI" id="CHEBI:57692"/>
    </ligand>
</feature>
<feature type="binding site" evidence="1">
    <location>
        <position position="73"/>
    </location>
    <ligand>
        <name>FAD</name>
        <dbReference type="ChEBI" id="CHEBI:57692"/>
    </ligand>
</feature>
<feature type="binding site" evidence="1">
    <location>
        <position position="166"/>
    </location>
    <ligand>
        <name>FAD</name>
        <dbReference type="ChEBI" id="CHEBI:57692"/>
    </ligand>
</feature>
<feature type="binding site" evidence="1">
    <location>
        <position position="212"/>
    </location>
    <ligand>
        <name>FAD</name>
        <dbReference type="ChEBI" id="CHEBI:57692"/>
    </ligand>
</feature>
<feature type="binding site" evidence="1">
    <location>
        <begin position="269"/>
        <end position="271"/>
    </location>
    <ligand>
        <name>FAD</name>
        <dbReference type="ChEBI" id="CHEBI:57692"/>
    </ligand>
</feature>
<feature type="binding site" evidence="1">
    <location>
        <position position="317"/>
    </location>
    <ligand>
        <name>FAD</name>
        <dbReference type="ChEBI" id="CHEBI:57692"/>
    </ligand>
</feature>
<feature type="binding site" evidence="1">
    <location>
        <position position="349"/>
    </location>
    <ligand>
        <name>FAD</name>
        <dbReference type="ChEBI" id="CHEBI:57692"/>
    </ligand>
</feature>
<feature type="binding site" evidence="1">
    <location>
        <position position="365"/>
    </location>
    <ligand>
        <name>FAD</name>
        <dbReference type="ChEBI" id="CHEBI:57692"/>
    </ligand>
</feature>
<feature type="mutagenesis site" description="In MobA3-1; able to hydroxylate 3-aminophenol; when associated with R-292 and A-416." evidence="2">
    <original>N</original>
    <variation>H</variation>
    <location>
        <position position="227"/>
    </location>
</feature>
<feature type="mutagenesis site" description="Broadens the substrate range rendering it able to transform phenol to catechol." evidence="2">
    <original>V</original>
    <variation>A</variation>
    <location>
        <position position="257"/>
    </location>
</feature>
<feature type="mutagenesis site" description="In MobA3-1; able to hydroxylate 3-aminophenol; when associated with H-227 and A-416." evidence="2">
    <original>Q</original>
    <variation>R</variation>
    <location>
        <position position="292"/>
    </location>
</feature>
<feature type="mutagenesis site" description="In MobA14-1; able to hydroxylate 3-aminophenol; when associated with R-429." evidence="2">
    <original>A</original>
    <variation>G</variation>
    <location>
        <position position="400"/>
    </location>
</feature>
<feature type="mutagenesis site" description="In MobA3-1; able to hydroxylate 3-aminophenol; when associated with H-227 and R-292." evidence="2">
    <original>D</original>
    <variation>A</variation>
    <location>
        <position position="416"/>
    </location>
</feature>
<feature type="mutagenesis site" description="In MobA14-1; able to hydroxylate 3-aminophenol; when associated with G-400." evidence="2">
    <original>K</original>
    <variation>R</variation>
    <location>
        <position position="429"/>
    </location>
</feature>
<feature type="sequence conflict" description="In Ref. 1; ABN58515/BAF34928." evidence="3" ref="1">
    <original>A</original>
    <variation>G</variation>
    <location>
        <position position="112"/>
    </location>
</feature>
<feature type="sequence conflict" description="In Ref. 1; ABN58515/BAF34928." evidence="3" ref="1">
    <original>I</original>
    <variation>V</variation>
    <location>
        <position position="171"/>
    </location>
</feature>
<feature type="sequence conflict" description="In Ref. 1; ABN58515/BAF34928." evidence="3" ref="1">
    <original>D</original>
    <variation>E</variation>
    <location>
        <position position="307"/>
    </location>
</feature>
<feature type="sequence conflict" description="In Ref. 1; ABN58515/BAF34928." evidence="3" ref="1">
    <original>A</original>
    <variation>V</variation>
    <location>
        <position position="331"/>
    </location>
</feature>
<feature type="sequence conflict" description="In Ref. 1; ABN58515/BAF34928." evidence="3" ref="1">
    <original>S</original>
    <variation>K</variation>
    <location>
        <position position="459"/>
    </location>
</feature>
<feature type="sequence conflict" description="In Ref. 1; ABN58515/BAF34928." evidence="3" ref="1">
    <original>S</original>
    <variation>C</variation>
    <location>
        <position position="482"/>
    </location>
</feature>
<feature type="sequence conflict" description="In Ref. 1; ABN58515/BAF34928." evidence="3" ref="1">
    <original>L</original>
    <variation>V</variation>
    <location>
        <position position="487"/>
    </location>
</feature>
<feature type="sequence conflict" description="In Ref. 1; ABN58515/BAF34928." evidence="3" ref="1">
    <original>G</original>
    <variation>A</variation>
    <location>
        <position position="506"/>
    </location>
</feature>
<feature type="sequence conflict" description="In Ref. 1; ABN58515/BAF34928." evidence="3" ref="1">
    <original>S</original>
    <variation>G</variation>
    <location>
        <position position="526"/>
    </location>
</feature>
<feature type="sequence conflict" description="In Ref. 1; ABN58515/BAF34928." evidence="3" ref="1">
    <original>S</original>
    <variation>A</variation>
    <location>
        <position position="538"/>
    </location>
</feature>
<feature type="sequence conflict" description="In Ref. 1; ABN58515/BAF34928." evidence="3" ref="1">
    <original>I</original>
    <variation>V</variation>
    <location>
        <position position="551"/>
    </location>
</feature>
<feature type="strand" evidence="4">
    <location>
        <begin position="31"/>
        <end position="38"/>
    </location>
</feature>
<feature type="helix" evidence="4">
    <location>
        <begin position="42"/>
        <end position="51"/>
    </location>
</feature>
<feature type="strand" evidence="4">
    <location>
        <begin position="59"/>
        <end position="62"/>
    </location>
</feature>
<feature type="strand" evidence="4">
    <location>
        <begin position="64"/>
        <end position="67"/>
    </location>
</feature>
<feature type="helix" evidence="4">
    <location>
        <begin position="79"/>
        <end position="87"/>
    </location>
</feature>
<feature type="helix" evidence="4">
    <location>
        <begin position="91"/>
        <end position="97"/>
    </location>
</feature>
<feature type="strand" evidence="4">
    <location>
        <begin position="98"/>
        <end position="101"/>
    </location>
</feature>
<feature type="strand" evidence="4">
    <location>
        <begin position="103"/>
        <end position="109"/>
    </location>
</feature>
<feature type="strand" evidence="5">
    <location>
        <begin position="111"/>
        <end position="113"/>
    </location>
</feature>
<feature type="strand" evidence="4">
    <location>
        <begin position="117"/>
        <end position="126"/>
    </location>
</feature>
<feature type="strand" evidence="4">
    <location>
        <begin position="135"/>
        <end position="137"/>
    </location>
</feature>
<feature type="helix" evidence="4">
    <location>
        <begin position="140"/>
        <end position="153"/>
    </location>
</feature>
<feature type="strand" evidence="4">
    <location>
        <begin position="163"/>
        <end position="171"/>
    </location>
</feature>
<feature type="strand" evidence="4">
    <location>
        <begin position="180"/>
        <end position="186"/>
    </location>
</feature>
<feature type="helix" evidence="4">
    <location>
        <begin position="189"/>
        <end position="191"/>
    </location>
</feature>
<feature type="strand" evidence="4">
    <location>
        <begin position="195"/>
        <end position="205"/>
    </location>
</feature>
<feature type="helix" evidence="4">
    <location>
        <begin position="212"/>
        <end position="216"/>
    </location>
</feature>
<feature type="strand" evidence="4">
    <location>
        <begin position="230"/>
        <end position="239"/>
    </location>
</feature>
<feature type="turn" evidence="4">
    <location>
        <begin position="242"/>
        <end position="245"/>
    </location>
</feature>
<feature type="strand" evidence="4">
    <location>
        <begin position="246"/>
        <end position="252"/>
    </location>
</feature>
<feature type="strand" evidence="4">
    <location>
        <begin position="255"/>
        <end position="261"/>
    </location>
</feature>
<feature type="strand" evidence="4">
    <location>
        <begin position="268"/>
        <end position="273"/>
    </location>
</feature>
<feature type="helix" evidence="4">
    <location>
        <begin position="290"/>
        <end position="301"/>
    </location>
</feature>
<feature type="strand" evidence="4">
    <location>
        <begin position="306"/>
        <end position="317"/>
    </location>
</feature>
<feature type="strand" evidence="4">
    <location>
        <begin position="327"/>
        <end position="329"/>
    </location>
</feature>
<feature type="strand" evidence="4">
    <location>
        <begin position="344"/>
        <end position="346"/>
    </location>
</feature>
<feature type="helix" evidence="4">
    <location>
        <begin position="348"/>
        <end position="350"/>
    </location>
</feature>
<feature type="helix" evidence="4">
    <location>
        <begin position="356"/>
        <end position="358"/>
    </location>
</feature>
<feature type="helix" evidence="4">
    <location>
        <begin position="363"/>
        <end position="380"/>
    </location>
</feature>
<feature type="helix" evidence="4">
    <location>
        <begin position="386"/>
        <end position="389"/>
    </location>
</feature>
<feature type="helix" evidence="4">
    <location>
        <begin position="390"/>
        <end position="409"/>
    </location>
</feature>
<feature type="helix" evidence="4">
    <location>
        <begin position="428"/>
        <end position="442"/>
    </location>
</feature>
<feature type="strand" evidence="4">
    <location>
        <begin position="451"/>
        <end position="455"/>
    </location>
</feature>
<feature type="helix" evidence="4">
    <location>
        <begin position="461"/>
        <end position="463"/>
    </location>
</feature>
<feature type="strand" evidence="4">
    <location>
        <begin position="477"/>
        <end position="480"/>
    </location>
</feature>
<feature type="turn" evidence="4">
    <location>
        <begin position="481"/>
        <end position="483"/>
    </location>
</feature>
<feature type="strand" evidence="4">
    <location>
        <begin position="486"/>
        <end position="488"/>
    </location>
</feature>
<feature type="helix" evidence="4">
    <location>
        <begin position="489"/>
        <end position="492"/>
    </location>
</feature>
<feature type="strand" evidence="4">
    <location>
        <begin position="495"/>
        <end position="497"/>
    </location>
</feature>
<feature type="strand" evidence="4">
    <location>
        <begin position="499"/>
        <end position="504"/>
    </location>
</feature>
<feature type="turn" evidence="4">
    <location>
        <begin position="507"/>
        <end position="511"/>
    </location>
</feature>
<feature type="helix" evidence="4">
    <location>
        <begin position="516"/>
        <end position="526"/>
    </location>
</feature>
<feature type="helix" evidence="4">
    <location>
        <begin position="531"/>
        <end position="535"/>
    </location>
</feature>
<feature type="strand" evidence="4">
    <location>
        <begin position="544"/>
        <end position="551"/>
    </location>
</feature>
<feature type="helix" evidence="4">
    <location>
        <begin position="556"/>
        <end position="558"/>
    </location>
</feature>
<feature type="helix" evidence="4">
    <location>
        <begin position="561"/>
        <end position="563"/>
    </location>
</feature>
<feature type="helix" evidence="4">
    <location>
        <begin position="566"/>
        <end position="568"/>
    </location>
</feature>
<feature type="turn" evidence="4">
    <location>
        <begin position="573"/>
        <end position="576"/>
    </location>
</feature>
<feature type="strand" evidence="4">
    <location>
        <begin position="582"/>
        <end position="585"/>
    </location>
</feature>
<feature type="helix" evidence="4">
    <location>
        <begin position="595"/>
        <end position="598"/>
    </location>
</feature>
<feature type="turn" evidence="4">
    <location>
        <begin position="603"/>
        <end position="605"/>
    </location>
</feature>
<feature type="strand" evidence="4">
    <location>
        <begin position="607"/>
        <end position="611"/>
    </location>
</feature>
<feature type="strand" evidence="4">
    <location>
        <begin position="615"/>
        <end position="621"/>
    </location>
</feature>
<feature type="helix" evidence="4">
    <location>
        <begin position="626"/>
        <end position="634"/>
    </location>
</feature>
<evidence type="ECO:0000269" key="1">
    <source>
    </source>
</evidence>
<evidence type="ECO:0000269" key="2">
    <source>
    </source>
</evidence>
<evidence type="ECO:0000305" key="3"/>
<evidence type="ECO:0007829" key="4">
    <source>
        <dbReference type="PDB" id="2DKH"/>
    </source>
</evidence>
<evidence type="ECO:0007829" key="5">
    <source>
        <dbReference type="PDB" id="2DKI"/>
    </source>
</evidence>
<sequence>MQFHLNGFRPGNPLIAPASPLAPAHTEAVPSQVDVLIVGCGPAGLTLAAQLAAFPDIRTCIVEQKEGPMELGQADGIACRTMEMFEAFEFADSILKEACWINDVTFWKPDPAQPGRIARHGRVQDTEDGLSEFPHVILNQARVHDHYLERMRNSPSRLEPHYARRVLDVKIDHGAADYPVTVTLERCDAAHAGQIETVQARYVVGCDGARSNVRRAIGRQLVGDSANQAWGVMDVLAVTDFPDVRYKVAIQSEQGNVLIIPREGGHLVRFYVEMDKLDADERVASRNITVEQLIATAQRVLHPYKLDVKNVPWWSVYEIGQRICAKYDDVADAVATPDSPLPRVFIAGDACHTHSPKAGQGMNFSMQDSFNLGWKLAAVLRKQCAPELLHTYSSERQVVAQQLIDFDREWAKMFSDPAKEGGQGGVDPKEFQKYFEQHGRFTAGVGTHYAPSLLTGQASHQALASGFTVGMRFHSAPVVRVSDAKPLQLGHCGKADGRWRLYAFAGQNDLAQPESGLLALCRFLESDAASPLRRFTPSGQDIDSIFDLRAIFPQAYTEVALETLPALLLPPKGQLGMIDYEKVFSPDLKNAGQDIFELRGIDRQQGALVVVRPDQYVAQVLPLGDHAALSAYFESFMRA</sequence>
<organism>
    <name type="scientific">Comamonas testosteroni</name>
    <name type="common">Pseudomonas testosteroni</name>
    <dbReference type="NCBI Taxonomy" id="285"/>
    <lineage>
        <taxon>Bacteria</taxon>
        <taxon>Pseudomonadati</taxon>
        <taxon>Pseudomonadota</taxon>
        <taxon>Betaproteobacteria</taxon>
        <taxon>Burkholderiales</taxon>
        <taxon>Comamonadaceae</taxon>
        <taxon>Comamonas</taxon>
    </lineage>
</organism>
<gene>
    <name type="primary">mobA</name>
</gene>